<name>ENO_YERPN</name>
<feature type="initiator methionine" description="Removed" evidence="1">
    <location>
        <position position="1"/>
    </location>
</feature>
<feature type="chain" id="PRO_0000267139" description="Enolase">
    <location>
        <begin position="2"/>
        <end position="431"/>
    </location>
</feature>
<feature type="active site" description="Proton donor" evidence="2">
    <location>
        <position position="209"/>
    </location>
</feature>
<feature type="active site" description="Proton acceptor" evidence="2">
    <location>
        <position position="342"/>
    </location>
</feature>
<feature type="binding site" evidence="2">
    <location>
        <position position="167"/>
    </location>
    <ligand>
        <name>(2R)-2-phosphoglycerate</name>
        <dbReference type="ChEBI" id="CHEBI:58289"/>
    </ligand>
</feature>
<feature type="binding site" evidence="2">
    <location>
        <position position="246"/>
    </location>
    <ligand>
        <name>Mg(2+)</name>
        <dbReference type="ChEBI" id="CHEBI:18420"/>
    </ligand>
</feature>
<feature type="binding site" evidence="2">
    <location>
        <position position="290"/>
    </location>
    <ligand>
        <name>Mg(2+)</name>
        <dbReference type="ChEBI" id="CHEBI:18420"/>
    </ligand>
</feature>
<feature type="binding site" evidence="2">
    <location>
        <position position="317"/>
    </location>
    <ligand>
        <name>Mg(2+)</name>
        <dbReference type="ChEBI" id="CHEBI:18420"/>
    </ligand>
</feature>
<feature type="binding site" evidence="2">
    <location>
        <position position="342"/>
    </location>
    <ligand>
        <name>(2R)-2-phosphoglycerate</name>
        <dbReference type="ChEBI" id="CHEBI:58289"/>
    </ligand>
</feature>
<feature type="binding site" evidence="2">
    <location>
        <position position="371"/>
    </location>
    <ligand>
        <name>(2R)-2-phosphoglycerate</name>
        <dbReference type="ChEBI" id="CHEBI:58289"/>
    </ligand>
</feature>
<feature type="binding site" evidence="2">
    <location>
        <position position="372"/>
    </location>
    <ligand>
        <name>(2R)-2-phosphoglycerate</name>
        <dbReference type="ChEBI" id="CHEBI:58289"/>
    </ligand>
</feature>
<feature type="binding site" evidence="2">
    <location>
        <position position="393"/>
    </location>
    <ligand>
        <name>(2R)-2-phosphoglycerate</name>
        <dbReference type="ChEBI" id="CHEBI:58289"/>
    </ligand>
</feature>
<proteinExistence type="inferred from homology"/>
<protein>
    <recommendedName>
        <fullName evidence="2">Enolase</fullName>
        <ecNumber evidence="2">4.2.1.11</ecNumber>
    </recommendedName>
    <alternativeName>
        <fullName evidence="2">2-phospho-D-glycerate hydro-lyase</fullName>
    </alternativeName>
    <alternativeName>
        <fullName evidence="2">2-phosphoglycerate dehydratase</fullName>
    </alternativeName>
</protein>
<keyword id="KW-0963">Cytoplasm</keyword>
<keyword id="KW-0324">Glycolysis</keyword>
<keyword id="KW-0456">Lyase</keyword>
<keyword id="KW-0460">Magnesium</keyword>
<keyword id="KW-0479">Metal-binding</keyword>
<keyword id="KW-0964">Secreted</keyword>
<reference key="1">
    <citation type="journal article" date="2006" name="J. Bacteriol.">
        <title>Complete genome sequence of Yersinia pestis strains Antiqua and Nepal516: evidence of gene reduction in an emerging pathogen.</title>
        <authorList>
            <person name="Chain P.S.G."/>
            <person name="Hu P."/>
            <person name="Malfatti S.A."/>
            <person name="Radnedge L."/>
            <person name="Larimer F."/>
            <person name="Vergez L.M."/>
            <person name="Worsham P."/>
            <person name="Chu M.C."/>
            <person name="Andersen G.L."/>
        </authorList>
    </citation>
    <scope>NUCLEOTIDE SEQUENCE [LARGE SCALE GENOMIC DNA]</scope>
    <source>
        <strain>Nepal516</strain>
    </source>
</reference>
<reference key="2">
    <citation type="submission" date="2009-04" db="EMBL/GenBank/DDBJ databases">
        <title>Yersinia pestis Nepal516A whole genome shotgun sequencing project.</title>
        <authorList>
            <person name="Plunkett G. III"/>
            <person name="Anderson B.D."/>
            <person name="Baumler D.J."/>
            <person name="Burland V."/>
            <person name="Cabot E.L."/>
            <person name="Glasner J.D."/>
            <person name="Mau B."/>
            <person name="Neeno-Eckwall E."/>
            <person name="Perna N.T."/>
            <person name="Munk A.C."/>
            <person name="Tapia R."/>
            <person name="Green L.D."/>
            <person name="Rogers Y.C."/>
            <person name="Detter J.C."/>
            <person name="Bruce D.C."/>
            <person name="Brettin T.S."/>
        </authorList>
    </citation>
    <scope>NUCLEOTIDE SEQUENCE [LARGE SCALE GENOMIC DNA]</scope>
    <source>
        <strain>Nepal516</strain>
    </source>
</reference>
<sequence>MSKIVKVIGREIIDSRGNPTVEAEVHLEGGFVGLAAAPSGASTGSREALELRDGDKSRFLGKGVLKAVAAVNGPIAQAVIGKDAKDQANIDKIMIDLDGTENKSQFGANAILAVSLAAAKAAAASKGMPLYEHIAELNGTPGKFSMPLPMMNIINGGEHADNNVDIQEFMIQPVGAKTLKEAVRIGSEVFHHLAKVLKAKGLNTAVGDEGGYAPNLGSNAEALAVIAEAVKAAGYELGKDITLAMDCAASEFYKDGKYVLAGEGNKAFTSEEFTHFLEDLTKQYPIVSIEDGLDESDWAGFKYQTEVLGDKIQLVGDDLFVTNTKILKEGIEKGVANSILIKFNQIGSLTETLAAIKMAKDAGYTAVISHRSGETEDATIADLAVGTAAGQIKTGSMSRSDRVAKYNQLIRIEEALGDRAPFNGLKEVKGQ</sequence>
<evidence type="ECO:0000250" key="1"/>
<evidence type="ECO:0000255" key="2">
    <source>
        <dbReference type="HAMAP-Rule" id="MF_00318"/>
    </source>
</evidence>
<accession>Q1CLT2</accession>
<accession>C4GQ83</accession>
<organism>
    <name type="scientific">Yersinia pestis bv. Antiqua (strain Nepal516)</name>
    <dbReference type="NCBI Taxonomy" id="377628"/>
    <lineage>
        <taxon>Bacteria</taxon>
        <taxon>Pseudomonadati</taxon>
        <taxon>Pseudomonadota</taxon>
        <taxon>Gammaproteobacteria</taxon>
        <taxon>Enterobacterales</taxon>
        <taxon>Yersiniaceae</taxon>
        <taxon>Yersinia</taxon>
    </lineage>
</organism>
<gene>
    <name evidence="2" type="primary">eno</name>
    <name type="ordered locus">YPN_0716</name>
    <name type="ORF">YP516_0761</name>
</gene>
<comment type="function">
    <text evidence="2">Catalyzes the reversible conversion of 2-phosphoglycerate (2-PG) into phosphoenolpyruvate (PEP). It is essential for the degradation of carbohydrates via glycolysis.</text>
</comment>
<comment type="catalytic activity">
    <reaction evidence="2">
        <text>(2R)-2-phosphoglycerate = phosphoenolpyruvate + H2O</text>
        <dbReference type="Rhea" id="RHEA:10164"/>
        <dbReference type="ChEBI" id="CHEBI:15377"/>
        <dbReference type="ChEBI" id="CHEBI:58289"/>
        <dbReference type="ChEBI" id="CHEBI:58702"/>
        <dbReference type="EC" id="4.2.1.11"/>
    </reaction>
</comment>
<comment type="cofactor">
    <cofactor evidence="2">
        <name>Mg(2+)</name>
        <dbReference type="ChEBI" id="CHEBI:18420"/>
    </cofactor>
    <text evidence="2">Binds a second Mg(2+) ion via substrate during catalysis.</text>
</comment>
<comment type="pathway">
    <text evidence="2">Carbohydrate degradation; glycolysis; pyruvate from D-glyceraldehyde 3-phosphate: step 4/5.</text>
</comment>
<comment type="subunit">
    <text evidence="2">Component of the RNA degradosome, a multiprotein complex involved in RNA processing and mRNA degradation.</text>
</comment>
<comment type="subcellular location">
    <subcellularLocation>
        <location evidence="2">Cytoplasm</location>
    </subcellularLocation>
    <subcellularLocation>
        <location evidence="2">Secreted</location>
    </subcellularLocation>
    <subcellularLocation>
        <location evidence="2">Cell surface</location>
    </subcellularLocation>
    <text evidence="2">Fractions of enolase are present in both the cytoplasm and on the cell surface.</text>
</comment>
<comment type="similarity">
    <text evidence="2">Belongs to the enolase family.</text>
</comment>
<dbReference type="EC" id="4.2.1.11" evidence="2"/>
<dbReference type="EMBL" id="CP000305">
    <property type="protein sequence ID" value="ABG17048.1"/>
    <property type="molecule type" value="Genomic_DNA"/>
</dbReference>
<dbReference type="EMBL" id="ACNQ01000007">
    <property type="protein sequence ID" value="EEO77909.1"/>
    <property type="molecule type" value="Genomic_DNA"/>
</dbReference>
<dbReference type="RefSeq" id="WP_002209377.1">
    <property type="nucleotide sequence ID" value="NZ_ACNQ01000007.1"/>
</dbReference>
<dbReference type="SMR" id="Q1CLT2"/>
<dbReference type="GeneID" id="96664252"/>
<dbReference type="KEGG" id="ypn:YPN_0716"/>
<dbReference type="HOGENOM" id="CLU_031223_2_1_6"/>
<dbReference type="UniPathway" id="UPA00109">
    <property type="reaction ID" value="UER00187"/>
</dbReference>
<dbReference type="Proteomes" id="UP000008936">
    <property type="component" value="Chromosome"/>
</dbReference>
<dbReference type="GO" id="GO:0009986">
    <property type="term" value="C:cell surface"/>
    <property type="evidence" value="ECO:0007669"/>
    <property type="project" value="UniProtKB-SubCell"/>
</dbReference>
<dbReference type="GO" id="GO:0005576">
    <property type="term" value="C:extracellular region"/>
    <property type="evidence" value="ECO:0007669"/>
    <property type="project" value="UniProtKB-SubCell"/>
</dbReference>
<dbReference type="GO" id="GO:0000015">
    <property type="term" value="C:phosphopyruvate hydratase complex"/>
    <property type="evidence" value="ECO:0007669"/>
    <property type="project" value="InterPro"/>
</dbReference>
<dbReference type="GO" id="GO:0000287">
    <property type="term" value="F:magnesium ion binding"/>
    <property type="evidence" value="ECO:0007669"/>
    <property type="project" value="UniProtKB-UniRule"/>
</dbReference>
<dbReference type="GO" id="GO:0004634">
    <property type="term" value="F:phosphopyruvate hydratase activity"/>
    <property type="evidence" value="ECO:0007669"/>
    <property type="project" value="UniProtKB-UniRule"/>
</dbReference>
<dbReference type="GO" id="GO:0006096">
    <property type="term" value="P:glycolytic process"/>
    <property type="evidence" value="ECO:0007669"/>
    <property type="project" value="UniProtKB-UniRule"/>
</dbReference>
<dbReference type="CDD" id="cd03313">
    <property type="entry name" value="enolase"/>
    <property type="match status" value="1"/>
</dbReference>
<dbReference type="FunFam" id="3.20.20.120:FF:000001">
    <property type="entry name" value="Enolase"/>
    <property type="match status" value="1"/>
</dbReference>
<dbReference type="FunFam" id="3.30.390.10:FF:000001">
    <property type="entry name" value="Enolase"/>
    <property type="match status" value="1"/>
</dbReference>
<dbReference type="Gene3D" id="3.20.20.120">
    <property type="entry name" value="Enolase-like C-terminal domain"/>
    <property type="match status" value="1"/>
</dbReference>
<dbReference type="Gene3D" id="3.30.390.10">
    <property type="entry name" value="Enolase-like, N-terminal domain"/>
    <property type="match status" value="1"/>
</dbReference>
<dbReference type="HAMAP" id="MF_00318">
    <property type="entry name" value="Enolase"/>
    <property type="match status" value="1"/>
</dbReference>
<dbReference type="InterPro" id="IPR000941">
    <property type="entry name" value="Enolase"/>
</dbReference>
<dbReference type="InterPro" id="IPR036849">
    <property type="entry name" value="Enolase-like_C_sf"/>
</dbReference>
<dbReference type="InterPro" id="IPR029017">
    <property type="entry name" value="Enolase-like_N"/>
</dbReference>
<dbReference type="InterPro" id="IPR020810">
    <property type="entry name" value="Enolase_C"/>
</dbReference>
<dbReference type="InterPro" id="IPR020809">
    <property type="entry name" value="Enolase_CS"/>
</dbReference>
<dbReference type="InterPro" id="IPR020811">
    <property type="entry name" value="Enolase_N"/>
</dbReference>
<dbReference type="NCBIfam" id="TIGR01060">
    <property type="entry name" value="eno"/>
    <property type="match status" value="1"/>
</dbReference>
<dbReference type="PANTHER" id="PTHR11902">
    <property type="entry name" value="ENOLASE"/>
    <property type="match status" value="1"/>
</dbReference>
<dbReference type="PANTHER" id="PTHR11902:SF1">
    <property type="entry name" value="ENOLASE"/>
    <property type="match status" value="1"/>
</dbReference>
<dbReference type="Pfam" id="PF00113">
    <property type="entry name" value="Enolase_C"/>
    <property type="match status" value="1"/>
</dbReference>
<dbReference type="Pfam" id="PF03952">
    <property type="entry name" value="Enolase_N"/>
    <property type="match status" value="1"/>
</dbReference>
<dbReference type="PIRSF" id="PIRSF001400">
    <property type="entry name" value="Enolase"/>
    <property type="match status" value="1"/>
</dbReference>
<dbReference type="PRINTS" id="PR00148">
    <property type="entry name" value="ENOLASE"/>
</dbReference>
<dbReference type="SFLD" id="SFLDF00002">
    <property type="entry name" value="enolase"/>
    <property type="match status" value="1"/>
</dbReference>
<dbReference type="SFLD" id="SFLDG00178">
    <property type="entry name" value="enolase"/>
    <property type="match status" value="1"/>
</dbReference>
<dbReference type="SMART" id="SM01192">
    <property type="entry name" value="Enolase_C"/>
    <property type="match status" value="1"/>
</dbReference>
<dbReference type="SMART" id="SM01193">
    <property type="entry name" value="Enolase_N"/>
    <property type="match status" value="1"/>
</dbReference>
<dbReference type="SUPFAM" id="SSF51604">
    <property type="entry name" value="Enolase C-terminal domain-like"/>
    <property type="match status" value="1"/>
</dbReference>
<dbReference type="SUPFAM" id="SSF54826">
    <property type="entry name" value="Enolase N-terminal domain-like"/>
    <property type="match status" value="1"/>
</dbReference>
<dbReference type="PROSITE" id="PS00164">
    <property type="entry name" value="ENOLASE"/>
    <property type="match status" value="1"/>
</dbReference>